<protein>
    <recommendedName>
        <fullName>Serpentine receptor class epsilon-13</fullName>
        <shortName>Protein sre-13</shortName>
    </recommendedName>
</protein>
<sequence length="359" mass="42296">MSFNISQENEFQTMYIKYFNKTYSIIEGSYNYYLFVFYIQIALIFIVLFYYLLNVYIDIKTCQFSTNTQKIHHAIYLPCVLGHVMCLIQKILLIKDSPAGDDMTNPVFYYISLFRAIFCFPGFYCLSAFVAERWFATYFLNDYEKNQRTWLVGLILWIIYSIAFISALDFHTAPSTVIHVTIFILLSCLAYLSNYLNFLLNRSYYYKSNRSDGGGYSLAQRFQISDNIRFSFFFNRLALSIAFFQISGPMCLLIDNLNISRSWKNLNTVVFDTILLLYAIVTPFVIYHHNPKYRTELQKIANSIRNIRVRTNKNQIMPMDSLDESFNSLRIQDTFGKTIVFNVTEQTSTYFEKLDRAWS</sequence>
<evidence type="ECO:0000255" key="1"/>
<evidence type="ECO:0000305" key="2"/>
<feature type="chain" id="PRO_0000104539" description="Serpentine receptor class epsilon-13">
    <location>
        <begin position="1"/>
        <end position="359"/>
    </location>
</feature>
<feature type="transmembrane region" description="Helical" evidence="1">
    <location>
        <begin position="33"/>
        <end position="53"/>
    </location>
</feature>
<feature type="transmembrane region" description="Helical" evidence="1">
    <location>
        <begin position="74"/>
        <end position="94"/>
    </location>
</feature>
<feature type="transmembrane region" description="Helical" evidence="1">
    <location>
        <begin position="111"/>
        <end position="131"/>
    </location>
</feature>
<feature type="transmembrane region" description="Helical" evidence="1">
    <location>
        <begin position="150"/>
        <end position="170"/>
    </location>
</feature>
<feature type="transmembrane region" description="Helical" evidence="1">
    <location>
        <begin position="180"/>
        <end position="200"/>
    </location>
</feature>
<feature type="transmembrane region" description="Helical" evidence="1">
    <location>
        <begin position="237"/>
        <end position="257"/>
    </location>
</feature>
<feature type="transmembrane region" description="Helical" evidence="1">
    <location>
        <begin position="266"/>
        <end position="286"/>
    </location>
</feature>
<name>SRE13_CAEEL</name>
<dbReference type="EMBL" id="Z93375">
    <property type="protein sequence ID" value="CAB07564.2"/>
    <property type="molecule type" value="Genomic_DNA"/>
</dbReference>
<dbReference type="PIR" id="T19816">
    <property type="entry name" value="T19816"/>
</dbReference>
<dbReference type="RefSeq" id="NP_497042.2">
    <property type="nucleotide sequence ID" value="NM_064641.4"/>
</dbReference>
<dbReference type="SMR" id="O45300"/>
<dbReference type="FunCoup" id="O45300">
    <property type="interactions" value="151"/>
</dbReference>
<dbReference type="STRING" id="6239.C38C6.4.1"/>
<dbReference type="PaxDb" id="6239-C38C6.4"/>
<dbReference type="EnsemblMetazoa" id="C38C6.4.1">
    <property type="protein sequence ID" value="C38C6.4.1"/>
    <property type="gene ID" value="WBGene00007997"/>
</dbReference>
<dbReference type="GeneID" id="183306"/>
<dbReference type="KEGG" id="cel:CELE_C38C6.4"/>
<dbReference type="UCSC" id="C38C6.4">
    <property type="organism name" value="c. elegans"/>
</dbReference>
<dbReference type="AGR" id="WB:WBGene00007997"/>
<dbReference type="CTD" id="183306"/>
<dbReference type="WormBase" id="C38C6.4">
    <property type="protein sequence ID" value="CE38042"/>
    <property type="gene ID" value="WBGene00007997"/>
    <property type="gene designation" value="sre-13"/>
</dbReference>
<dbReference type="eggNOG" id="ENOG502TGTT">
    <property type="taxonomic scope" value="Eukaryota"/>
</dbReference>
<dbReference type="GeneTree" id="ENSGT00970000196776"/>
<dbReference type="HOGENOM" id="CLU_043866_0_0_1"/>
<dbReference type="InParanoid" id="O45300"/>
<dbReference type="OMA" id="FVIYHHN"/>
<dbReference type="OrthoDB" id="5877072at2759"/>
<dbReference type="PhylomeDB" id="O45300"/>
<dbReference type="PRO" id="PR:O45300"/>
<dbReference type="Proteomes" id="UP000001940">
    <property type="component" value="Chromosome II"/>
</dbReference>
<dbReference type="Bgee" id="WBGene00007997">
    <property type="expression patterns" value="Expressed in embryo and 2 other cell types or tissues"/>
</dbReference>
<dbReference type="GO" id="GO:0016020">
    <property type="term" value="C:membrane"/>
    <property type="evidence" value="ECO:0007669"/>
    <property type="project" value="UniProtKB-SubCell"/>
</dbReference>
<dbReference type="GO" id="GO:0007606">
    <property type="term" value="P:sensory perception of chemical stimulus"/>
    <property type="evidence" value="ECO:0007669"/>
    <property type="project" value="InterPro"/>
</dbReference>
<dbReference type="InterPro" id="IPR004151">
    <property type="entry name" value="7TM_GPCR_serpentine_rcpt_Sre"/>
</dbReference>
<dbReference type="InterPro" id="IPR052854">
    <property type="entry name" value="Serpentine_rcpt_epsilon"/>
</dbReference>
<dbReference type="PANTHER" id="PTHR47518:SF3">
    <property type="entry name" value="SERPENTINE RECEPTOR CLASS EPSILON-13"/>
    <property type="match status" value="1"/>
</dbReference>
<dbReference type="PANTHER" id="PTHR47518">
    <property type="entry name" value="SERPENTINE RECEPTOR CLASS EPSILON-13-RELATED"/>
    <property type="match status" value="1"/>
</dbReference>
<dbReference type="Pfam" id="PF03125">
    <property type="entry name" value="Sre"/>
    <property type="match status" value="1"/>
</dbReference>
<proteinExistence type="inferred from homology"/>
<comment type="subcellular location">
    <subcellularLocation>
        <location evidence="2">Membrane</location>
        <topology evidence="2">Multi-pass membrane protein</topology>
    </subcellularLocation>
</comment>
<comment type="similarity">
    <text evidence="2">Belongs to the nematode receptor-like protein sre family.</text>
</comment>
<accession>O45300</accession>
<organism>
    <name type="scientific">Caenorhabditis elegans</name>
    <dbReference type="NCBI Taxonomy" id="6239"/>
    <lineage>
        <taxon>Eukaryota</taxon>
        <taxon>Metazoa</taxon>
        <taxon>Ecdysozoa</taxon>
        <taxon>Nematoda</taxon>
        <taxon>Chromadorea</taxon>
        <taxon>Rhabditida</taxon>
        <taxon>Rhabditina</taxon>
        <taxon>Rhabditomorpha</taxon>
        <taxon>Rhabditoidea</taxon>
        <taxon>Rhabditidae</taxon>
        <taxon>Peloderinae</taxon>
        <taxon>Caenorhabditis</taxon>
    </lineage>
</organism>
<reference key="1">
    <citation type="journal article" date="1998" name="Science">
        <title>Genome sequence of the nematode C. elegans: a platform for investigating biology.</title>
        <authorList>
            <consortium name="The C. elegans sequencing consortium"/>
        </authorList>
    </citation>
    <scope>NUCLEOTIDE SEQUENCE [LARGE SCALE GENOMIC DNA]</scope>
    <source>
        <strain>Bristol N2</strain>
    </source>
</reference>
<keyword id="KW-0472">Membrane</keyword>
<keyword id="KW-1185">Reference proteome</keyword>
<keyword id="KW-0812">Transmembrane</keyword>
<keyword id="KW-1133">Transmembrane helix</keyword>
<gene>
    <name type="primary">sre-13</name>
    <name type="ORF">C38C6.4</name>
</gene>